<sequence>MSPSVASPKTLYDKVWDSHVVDLQEDGTCLLYIDRHLIHEVTSPQAFEGLRTAGRKVRHPELALATVDHNIPTDPRKDMKDIASFIHQPDSRTQVLALENNIKEFGLTYYGMNDRRQGIVHVIGPEQGFTLPGTTLVCGDSHTSTHGAFGALAFGIGTSEVEHVLATQTILQRKSKNMRIRVNGKLPEGIASKDLILHIIGVIGTAGGTGSVIEFCGEAIEGLSMEARMSMCNMSIEAGARAGMIAPDATTFEYVKNRPLAPKGDDWEQAVAYWKTLRSDENAKYDIEVEINAADVLPTVTWGTSPQDVIPINGNIPDPAHVKDNVRAASIQRSLEYMGLKPNTSIVSYPIDKVFIGSCTNSRIEDLRLAAAVVKGRKVAANVKDAMIVPGSGLVKKMAEAEGLDQIFIEAGFDWREAGCSMCLGMNPDQLKPYERCASTSNRNFEGRQGAKGRTHLVSPAMAAAAAIKGHLCNVREFFGDVSNGSPSIITNKNYDPSHDVEGDIGLSVDDATDAVTDADGIATNVAGSVSSGSAGIPKFTVVEGIAAPLPMANVDTDKIIPKQFLKTIKRTGLGQFAFYEIRYDADGKEIPDFVLNREPYRHATVLVAHDNFGCGSSREHAPWALNDFGIRVIIAPSFADIFFNNCFKNGMLPIPTPIEQVNDMMKAAENQVKFSVDLVNQTITYGDKQVKFDVEPFRKHCLVNGLDDIGLTLQKETMIDAFEAAREENFPWMNIKRSRARLSPVKSNKQSSSRNDW</sequence>
<feature type="chain" id="PRO_0000076892" description="3-isopropylmalate dehydratase">
    <location>
        <begin position="1"/>
        <end position="758"/>
    </location>
</feature>
<feature type="binding site" evidence="1">
    <location>
        <position position="359"/>
    </location>
    <ligand>
        <name>[4Fe-4S] cluster</name>
        <dbReference type="ChEBI" id="CHEBI:49883"/>
    </ligand>
</feature>
<feature type="binding site" evidence="1">
    <location>
        <position position="420"/>
    </location>
    <ligand>
        <name>[4Fe-4S] cluster</name>
        <dbReference type="ChEBI" id="CHEBI:49883"/>
    </ligand>
</feature>
<feature type="binding site" evidence="1">
    <location>
        <position position="423"/>
    </location>
    <ligand>
        <name>[4Fe-4S] cluster</name>
        <dbReference type="ChEBI" id="CHEBI:49883"/>
    </ligand>
</feature>
<feature type="modified residue" description="Phosphoserine" evidence="2">
    <location>
        <position position="486"/>
    </location>
</feature>
<feature type="modified residue" description="Phosphoserine" evidence="2">
    <location>
        <position position="488"/>
    </location>
</feature>
<accession>O14289</accession>
<organism>
    <name type="scientific">Schizosaccharomyces pombe (strain 972 / ATCC 24843)</name>
    <name type="common">Fission yeast</name>
    <dbReference type="NCBI Taxonomy" id="284812"/>
    <lineage>
        <taxon>Eukaryota</taxon>
        <taxon>Fungi</taxon>
        <taxon>Dikarya</taxon>
        <taxon>Ascomycota</taxon>
        <taxon>Taphrinomycotina</taxon>
        <taxon>Schizosaccharomycetes</taxon>
        <taxon>Schizosaccharomycetales</taxon>
        <taxon>Schizosaccharomycetaceae</taxon>
        <taxon>Schizosaccharomyces</taxon>
    </lineage>
</organism>
<name>LEUC_SCHPO</name>
<dbReference type="EC" id="4.2.1.33"/>
<dbReference type="EMBL" id="CU329670">
    <property type="protein sequence ID" value="CAB16402.1"/>
    <property type="molecule type" value="Genomic_DNA"/>
</dbReference>
<dbReference type="PIR" id="T39210">
    <property type="entry name" value="T39210"/>
</dbReference>
<dbReference type="RefSeq" id="NP_594576.1">
    <property type="nucleotide sequence ID" value="NM_001020005.2"/>
</dbReference>
<dbReference type="SMR" id="O14289"/>
<dbReference type="BioGRID" id="279721">
    <property type="interactions" value="22"/>
</dbReference>
<dbReference type="FunCoup" id="O14289">
    <property type="interactions" value="148"/>
</dbReference>
<dbReference type="STRING" id="284812.O14289"/>
<dbReference type="iPTMnet" id="O14289"/>
<dbReference type="PaxDb" id="4896-SPAC9E9.03.1"/>
<dbReference type="EnsemblFungi" id="SPAC9E9.03.1">
    <property type="protein sequence ID" value="SPAC9E9.03.1:pep"/>
    <property type="gene ID" value="SPAC9E9.03"/>
</dbReference>
<dbReference type="GeneID" id="2543296"/>
<dbReference type="KEGG" id="spo:2543296"/>
<dbReference type="PomBase" id="SPAC9E9.03">
    <property type="gene designation" value="leu2"/>
</dbReference>
<dbReference type="VEuPathDB" id="FungiDB:SPAC9E9.03"/>
<dbReference type="eggNOG" id="KOG0454">
    <property type="taxonomic scope" value="Eukaryota"/>
</dbReference>
<dbReference type="HOGENOM" id="CLU_006714_1_2_1"/>
<dbReference type="InParanoid" id="O14289"/>
<dbReference type="OMA" id="EDNEPHT"/>
<dbReference type="PhylomeDB" id="O14289"/>
<dbReference type="UniPathway" id="UPA00048">
    <property type="reaction ID" value="UER00071"/>
</dbReference>
<dbReference type="PRO" id="PR:O14289"/>
<dbReference type="Proteomes" id="UP000002485">
    <property type="component" value="Chromosome I"/>
</dbReference>
<dbReference type="GO" id="GO:0009316">
    <property type="term" value="C:3-isopropylmalate dehydratase complex"/>
    <property type="evidence" value="ECO:0007669"/>
    <property type="project" value="InterPro"/>
</dbReference>
<dbReference type="GO" id="GO:0005829">
    <property type="term" value="C:cytosol"/>
    <property type="evidence" value="ECO:0000266"/>
    <property type="project" value="PomBase"/>
</dbReference>
<dbReference type="GO" id="GO:0003861">
    <property type="term" value="F:3-isopropylmalate dehydratase activity"/>
    <property type="evidence" value="ECO:0000266"/>
    <property type="project" value="PomBase"/>
</dbReference>
<dbReference type="GO" id="GO:0051539">
    <property type="term" value="F:4 iron, 4 sulfur cluster binding"/>
    <property type="evidence" value="ECO:0007669"/>
    <property type="project" value="UniProtKB-KW"/>
</dbReference>
<dbReference type="GO" id="GO:0046872">
    <property type="term" value="F:metal ion binding"/>
    <property type="evidence" value="ECO:0007669"/>
    <property type="project" value="UniProtKB-KW"/>
</dbReference>
<dbReference type="GO" id="GO:0009098">
    <property type="term" value="P:L-leucine biosynthetic process"/>
    <property type="evidence" value="ECO:0000269"/>
    <property type="project" value="PomBase"/>
</dbReference>
<dbReference type="CDD" id="cd01583">
    <property type="entry name" value="IPMI"/>
    <property type="match status" value="1"/>
</dbReference>
<dbReference type="CDD" id="cd01577">
    <property type="entry name" value="IPMI_Swivel"/>
    <property type="match status" value="1"/>
</dbReference>
<dbReference type="FunFam" id="3.30.499.10:FF:000006">
    <property type="entry name" value="3-isopropylmalate dehydratase large subunit"/>
    <property type="match status" value="1"/>
</dbReference>
<dbReference type="FunFam" id="3.30.499.10:FF:000007">
    <property type="entry name" value="3-isopropylmalate dehydratase large subunit"/>
    <property type="match status" value="1"/>
</dbReference>
<dbReference type="FunFam" id="3.20.19.10:FF:000003">
    <property type="entry name" value="3-isopropylmalate dehydratase small subunit"/>
    <property type="match status" value="1"/>
</dbReference>
<dbReference type="Gene3D" id="3.30.499.10">
    <property type="entry name" value="Aconitase, domain 3"/>
    <property type="match status" value="2"/>
</dbReference>
<dbReference type="Gene3D" id="3.20.19.10">
    <property type="entry name" value="Aconitase, domain 4"/>
    <property type="match status" value="1"/>
</dbReference>
<dbReference type="HAMAP" id="MF_01026">
    <property type="entry name" value="LeuC_type1"/>
    <property type="match status" value="1"/>
</dbReference>
<dbReference type="HAMAP" id="MF_01031">
    <property type="entry name" value="LeuD_type1"/>
    <property type="match status" value="1"/>
</dbReference>
<dbReference type="InterPro" id="IPR004430">
    <property type="entry name" value="3-IsopropMal_deHydase_lsu"/>
</dbReference>
<dbReference type="InterPro" id="IPR004431">
    <property type="entry name" value="3-IsopropMal_deHydase_ssu"/>
</dbReference>
<dbReference type="InterPro" id="IPR012235">
    <property type="entry name" value="3-IsopropMal_deHydtase_ssu/lsu"/>
</dbReference>
<dbReference type="InterPro" id="IPR015931">
    <property type="entry name" value="Acnase/IPM_dHydase_lsu_aba_1/3"/>
</dbReference>
<dbReference type="InterPro" id="IPR001030">
    <property type="entry name" value="Acoase/IPM_deHydtase_lsu_aba"/>
</dbReference>
<dbReference type="InterPro" id="IPR015928">
    <property type="entry name" value="Aconitase/3IPM_dehydase_swvl"/>
</dbReference>
<dbReference type="InterPro" id="IPR018136">
    <property type="entry name" value="Aconitase_4Fe-4S_BS"/>
</dbReference>
<dbReference type="InterPro" id="IPR036008">
    <property type="entry name" value="Aconitase_4Fe-4S_dom"/>
</dbReference>
<dbReference type="InterPro" id="IPR000573">
    <property type="entry name" value="AconitaseA/IPMdHydase_ssu_swvl"/>
</dbReference>
<dbReference type="InterPro" id="IPR050067">
    <property type="entry name" value="IPM_dehydratase_rel_enz"/>
</dbReference>
<dbReference type="InterPro" id="IPR033941">
    <property type="entry name" value="IPMI_cat"/>
</dbReference>
<dbReference type="InterPro" id="IPR033940">
    <property type="entry name" value="IPMI_Swivel"/>
</dbReference>
<dbReference type="NCBIfam" id="TIGR00170">
    <property type="entry name" value="leuC"/>
    <property type="match status" value="1"/>
</dbReference>
<dbReference type="NCBIfam" id="TIGR00171">
    <property type="entry name" value="leuD"/>
    <property type="match status" value="1"/>
</dbReference>
<dbReference type="NCBIfam" id="NF002458">
    <property type="entry name" value="PRK01641.1"/>
    <property type="match status" value="1"/>
</dbReference>
<dbReference type="NCBIfam" id="NF004016">
    <property type="entry name" value="PRK05478.1"/>
    <property type="match status" value="1"/>
</dbReference>
<dbReference type="NCBIfam" id="NF009116">
    <property type="entry name" value="PRK12466.1"/>
    <property type="match status" value="1"/>
</dbReference>
<dbReference type="PANTHER" id="PTHR43822:SF9">
    <property type="entry name" value="3-ISOPROPYLMALATE DEHYDRATASE"/>
    <property type="match status" value="1"/>
</dbReference>
<dbReference type="PANTHER" id="PTHR43822">
    <property type="entry name" value="HOMOACONITASE, MITOCHONDRIAL-RELATED"/>
    <property type="match status" value="1"/>
</dbReference>
<dbReference type="Pfam" id="PF00330">
    <property type="entry name" value="Aconitase"/>
    <property type="match status" value="1"/>
</dbReference>
<dbReference type="Pfam" id="PF00694">
    <property type="entry name" value="Aconitase_C"/>
    <property type="match status" value="1"/>
</dbReference>
<dbReference type="PIRSF" id="PIRSF001418">
    <property type="entry name" value="ACN"/>
    <property type="match status" value="1"/>
</dbReference>
<dbReference type="PRINTS" id="PR00415">
    <property type="entry name" value="ACONITASE"/>
</dbReference>
<dbReference type="SUPFAM" id="SSF53732">
    <property type="entry name" value="Aconitase iron-sulfur domain"/>
    <property type="match status" value="1"/>
</dbReference>
<dbReference type="SUPFAM" id="SSF52016">
    <property type="entry name" value="LeuD/IlvD-like"/>
    <property type="match status" value="1"/>
</dbReference>
<dbReference type="PROSITE" id="PS00450">
    <property type="entry name" value="ACONITASE_1"/>
    <property type="match status" value="1"/>
</dbReference>
<dbReference type="PROSITE" id="PS01244">
    <property type="entry name" value="ACONITASE_2"/>
    <property type="match status" value="1"/>
</dbReference>
<proteinExistence type="evidence at protein level"/>
<protein>
    <recommendedName>
        <fullName>3-isopropylmalate dehydratase</fullName>
        <ecNumber>4.2.1.33</ecNumber>
    </recommendedName>
    <alternativeName>
        <fullName>Alpha-IPM isomerase</fullName>
        <shortName>IPMI</shortName>
    </alternativeName>
    <alternativeName>
        <fullName>Isopropylmalate isomerase</fullName>
    </alternativeName>
</protein>
<reference key="1">
    <citation type="journal article" date="2002" name="Nature">
        <title>The genome sequence of Schizosaccharomyces pombe.</title>
        <authorList>
            <person name="Wood V."/>
            <person name="Gwilliam R."/>
            <person name="Rajandream M.A."/>
            <person name="Lyne M.H."/>
            <person name="Lyne R."/>
            <person name="Stewart A."/>
            <person name="Sgouros J.G."/>
            <person name="Peat N."/>
            <person name="Hayles J."/>
            <person name="Baker S.G."/>
            <person name="Basham D."/>
            <person name="Bowman S."/>
            <person name="Brooks K."/>
            <person name="Brown D."/>
            <person name="Brown S."/>
            <person name="Chillingworth T."/>
            <person name="Churcher C.M."/>
            <person name="Collins M."/>
            <person name="Connor R."/>
            <person name="Cronin A."/>
            <person name="Davis P."/>
            <person name="Feltwell T."/>
            <person name="Fraser A."/>
            <person name="Gentles S."/>
            <person name="Goble A."/>
            <person name="Hamlin N."/>
            <person name="Harris D.E."/>
            <person name="Hidalgo J."/>
            <person name="Hodgson G."/>
            <person name="Holroyd S."/>
            <person name="Hornsby T."/>
            <person name="Howarth S."/>
            <person name="Huckle E.J."/>
            <person name="Hunt S."/>
            <person name="Jagels K."/>
            <person name="James K.D."/>
            <person name="Jones L."/>
            <person name="Jones M."/>
            <person name="Leather S."/>
            <person name="McDonald S."/>
            <person name="McLean J."/>
            <person name="Mooney P."/>
            <person name="Moule S."/>
            <person name="Mungall K.L."/>
            <person name="Murphy L.D."/>
            <person name="Niblett D."/>
            <person name="Odell C."/>
            <person name="Oliver K."/>
            <person name="O'Neil S."/>
            <person name="Pearson D."/>
            <person name="Quail M.A."/>
            <person name="Rabbinowitsch E."/>
            <person name="Rutherford K.M."/>
            <person name="Rutter S."/>
            <person name="Saunders D."/>
            <person name="Seeger K."/>
            <person name="Sharp S."/>
            <person name="Skelton J."/>
            <person name="Simmonds M.N."/>
            <person name="Squares R."/>
            <person name="Squares S."/>
            <person name="Stevens K."/>
            <person name="Taylor K."/>
            <person name="Taylor R.G."/>
            <person name="Tivey A."/>
            <person name="Walsh S.V."/>
            <person name="Warren T."/>
            <person name="Whitehead S."/>
            <person name="Woodward J.R."/>
            <person name="Volckaert G."/>
            <person name="Aert R."/>
            <person name="Robben J."/>
            <person name="Grymonprez B."/>
            <person name="Weltjens I."/>
            <person name="Vanstreels E."/>
            <person name="Rieger M."/>
            <person name="Schaefer M."/>
            <person name="Mueller-Auer S."/>
            <person name="Gabel C."/>
            <person name="Fuchs M."/>
            <person name="Duesterhoeft A."/>
            <person name="Fritzc C."/>
            <person name="Holzer E."/>
            <person name="Moestl D."/>
            <person name="Hilbert H."/>
            <person name="Borzym K."/>
            <person name="Langer I."/>
            <person name="Beck A."/>
            <person name="Lehrach H."/>
            <person name="Reinhardt R."/>
            <person name="Pohl T.M."/>
            <person name="Eger P."/>
            <person name="Zimmermann W."/>
            <person name="Wedler H."/>
            <person name="Wambutt R."/>
            <person name="Purnelle B."/>
            <person name="Goffeau A."/>
            <person name="Cadieu E."/>
            <person name="Dreano S."/>
            <person name="Gloux S."/>
            <person name="Lelaure V."/>
            <person name="Mottier S."/>
            <person name="Galibert F."/>
            <person name="Aves S.J."/>
            <person name="Xiang Z."/>
            <person name="Hunt C."/>
            <person name="Moore K."/>
            <person name="Hurst S.M."/>
            <person name="Lucas M."/>
            <person name="Rochet M."/>
            <person name="Gaillardin C."/>
            <person name="Tallada V.A."/>
            <person name="Garzon A."/>
            <person name="Thode G."/>
            <person name="Daga R.R."/>
            <person name="Cruzado L."/>
            <person name="Jimenez J."/>
            <person name="Sanchez M."/>
            <person name="del Rey F."/>
            <person name="Benito J."/>
            <person name="Dominguez A."/>
            <person name="Revuelta J.L."/>
            <person name="Moreno S."/>
            <person name="Armstrong J."/>
            <person name="Forsburg S.L."/>
            <person name="Cerutti L."/>
            <person name="Lowe T."/>
            <person name="McCombie W.R."/>
            <person name="Paulsen I."/>
            <person name="Potashkin J."/>
            <person name="Shpakovski G.V."/>
            <person name="Ussery D."/>
            <person name="Barrell B.G."/>
            <person name="Nurse P."/>
        </authorList>
    </citation>
    <scope>NUCLEOTIDE SEQUENCE [LARGE SCALE GENOMIC DNA]</scope>
    <source>
        <strain>972 / ATCC 24843</strain>
    </source>
</reference>
<reference key="2">
    <citation type="journal article" date="2008" name="J. Proteome Res.">
        <title>Phosphoproteome analysis of fission yeast.</title>
        <authorList>
            <person name="Wilson-Grady J.T."/>
            <person name="Villen J."/>
            <person name="Gygi S.P."/>
        </authorList>
    </citation>
    <scope>PHOSPHORYLATION [LARGE SCALE ANALYSIS] AT SER-486 AND SER-488</scope>
    <scope>IDENTIFICATION BY MASS SPECTROMETRY</scope>
</reference>
<evidence type="ECO:0000250" key="1"/>
<evidence type="ECO:0000269" key="2">
    <source>
    </source>
</evidence>
<evidence type="ECO:0000305" key="3"/>
<comment type="function">
    <text>Catalyzes the isomerization between 2-isopropylmalate and 3-isopropylmalate, via the formation of 2-isopropylmaleate.</text>
</comment>
<comment type="catalytic activity">
    <reaction>
        <text>(2R,3S)-3-isopropylmalate = (2S)-2-isopropylmalate</text>
        <dbReference type="Rhea" id="RHEA:32287"/>
        <dbReference type="ChEBI" id="CHEBI:1178"/>
        <dbReference type="ChEBI" id="CHEBI:35121"/>
        <dbReference type="EC" id="4.2.1.33"/>
    </reaction>
</comment>
<comment type="cofactor">
    <cofactor evidence="1">
        <name>[4Fe-4S] cluster</name>
        <dbReference type="ChEBI" id="CHEBI:49883"/>
    </cofactor>
    <text evidence="1">Binds 1 [4Fe-4S] cluster per subunit.</text>
</comment>
<comment type="pathway">
    <text>Amino-acid biosynthesis; L-leucine biosynthesis; L-leucine from 3-methyl-2-oxobutanoate: step 2/4.</text>
</comment>
<comment type="similarity">
    <text evidence="3">Belongs to the aconitase/IPM isomerase family.</text>
</comment>
<gene>
    <name type="primary">leu2</name>
    <name type="ORF">SPAC9E9.03</name>
</gene>
<keyword id="KW-0004">4Fe-4S</keyword>
<keyword id="KW-0028">Amino-acid biosynthesis</keyword>
<keyword id="KW-0100">Branched-chain amino acid biosynthesis</keyword>
<keyword id="KW-0408">Iron</keyword>
<keyword id="KW-0411">Iron-sulfur</keyword>
<keyword id="KW-0432">Leucine biosynthesis</keyword>
<keyword id="KW-0456">Lyase</keyword>
<keyword id="KW-0479">Metal-binding</keyword>
<keyword id="KW-0597">Phosphoprotein</keyword>
<keyword id="KW-1185">Reference proteome</keyword>